<organism>
    <name type="scientific">Rhodobacter capsulatus</name>
    <name type="common">Rhodopseudomonas capsulata</name>
    <dbReference type="NCBI Taxonomy" id="1061"/>
    <lineage>
        <taxon>Bacteria</taxon>
        <taxon>Pseudomonadati</taxon>
        <taxon>Pseudomonadota</taxon>
        <taxon>Alphaproteobacteria</taxon>
        <taxon>Rhodobacterales</taxon>
        <taxon>Rhodobacter group</taxon>
        <taxon>Rhodobacter</taxon>
    </lineage>
</organism>
<feature type="chain" id="PRO_0000105590" description="HTH-type transcriptional activator AmpR">
    <location>
        <begin position="1"/>
        <end position="289"/>
    </location>
</feature>
<feature type="domain" description="HTH lysR-type" evidence="1">
    <location>
        <begin position="6"/>
        <end position="63"/>
    </location>
</feature>
<feature type="DNA-binding region" description="H-T-H motif" evidence="1">
    <location>
        <begin position="23"/>
        <end position="42"/>
    </location>
</feature>
<reference key="1">
    <citation type="journal article" date="1989" name="Biochem. J.">
        <title>The phototrophic bacterium Rhodopseudomonas capsulata sp108 encodes an indigenous class A beta-lactamase.</title>
        <authorList>
            <person name="Campbell J.I.A."/>
            <person name="Scahill S."/>
            <person name="Gibson T."/>
            <person name="Ambler R.P."/>
        </authorList>
    </citation>
    <scope>NUCLEOTIDE SEQUENCE [GENOMIC DNA]</scope>
    <source>
        <strain>SP108</strain>
    </source>
</reference>
<gene>
    <name type="primary">ampR</name>
</gene>
<sequence length="289" mass="31472">MDRPDLPLNALRVFEVAMRQGSFTKAAIELRVTQAAVSHQVARLEDLLGTALFLRTSQGLIPTDEGRLLFPVLEHGFDAMSRVLDRLGGRRDIEVLKVGVNTTFAMCWLMPRLEAFRQAHPQIDLRISTNNNRVEILREGLDMAIRFGTGGWTGHDAIPLAEAPMAPLCAPGLASRLLHPSDLGQVTLLRSYRSAEWPGWFEAAGVPCPPVTGPVFDSSVALAELATSGAGVALLPISMFESYIAQGRLAQPFGVTVSVGRYYLAWPSDRPATSAMSTFSRWLTGQSAE</sequence>
<keyword id="KW-0010">Activator</keyword>
<keyword id="KW-0963">Cytoplasm</keyword>
<keyword id="KW-0238">DNA-binding</keyword>
<keyword id="KW-0804">Transcription</keyword>
<keyword id="KW-0805">Transcription regulation</keyword>
<name>AMPR_RHOCA</name>
<evidence type="ECO:0000255" key="1">
    <source>
        <dbReference type="PROSITE-ProRule" id="PRU00253"/>
    </source>
</evidence>
<evidence type="ECO:0000305" key="2"/>
<comment type="function">
    <text>This protein is a positive regulator of gene expression of cephalosporinase (AmpC).</text>
</comment>
<comment type="subcellular location">
    <subcellularLocation>
        <location>Cytoplasm</location>
    </subcellularLocation>
</comment>
<comment type="similarity">
    <text evidence="2">Belongs to the LysR transcriptional regulatory family.</text>
</comment>
<protein>
    <recommendedName>
        <fullName>HTH-type transcriptional activator AmpR</fullName>
    </recommendedName>
</protein>
<dbReference type="EMBL" id="X15791">
    <property type="protein sequence ID" value="CAA33794.1"/>
    <property type="molecule type" value="Genomic_DNA"/>
</dbReference>
<dbReference type="PIR" id="S04648">
    <property type="entry name" value="S04648"/>
</dbReference>
<dbReference type="RefSeq" id="WP_035026280.1">
    <property type="nucleotide sequence ID" value="NZ_SWJZ01000009.1"/>
</dbReference>
<dbReference type="SMR" id="P14145"/>
<dbReference type="OrthoDB" id="9813056at2"/>
<dbReference type="GO" id="GO:0005737">
    <property type="term" value="C:cytoplasm"/>
    <property type="evidence" value="ECO:0007669"/>
    <property type="project" value="UniProtKB-SubCell"/>
</dbReference>
<dbReference type="GO" id="GO:0003700">
    <property type="term" value="F:DNA-binding transcription factor activity"/>
    <property type="evidence" value="ECO:0007669"/>
    <property type="project" value="InterPro"/>
</dbReference>
<dbReference type="GO" id="GO:0043565">
    <property type="term" value="F:sequence-specific DNA binding"/>
    <property type="evidence" value="ECO:0007669"/>
    <property type="project" value="TreeGrafter"/>
</dbReference>
<dbReference type="GO" id="GO:0006351">
    <property type="term" value="P:DNA-templated transcription"/>
    <property type="evidence" value="ECO:0007669"/>
    <property type="project" value="TreeGrafter"/>
</dbReference>
<dbReference type="CDD" id="cd08484">
    <property type="entry name" value="PBP2_LTTR_beta_lactamase"/>
    <property type="match status" value="1"/>
</dbReference>
<dbReference type="Gene3D" id="3.40.190.10">
    <property type="entry name" value="Periplasmic binding protein-like II"/>
    <property type="match status" value="2"/>
</dbReference>
<dbReference type="Gene3D" id="1.10.10.10">
    <property type="entry name" value="Winged helix-like DNA-binding domain superfamily/Winged helix DNA-binding domain"/>
    <property type="match status" value="1"/>
</dbReference>
<dbReference type="InterPro" id="IPR037420">
    <property type="entry name" value="AmpR_PBP2"/>
</dbReference>
<dbReference type="InterPro" id="IPR005119">
    <property type="entry name" value="LysR_subst-bd"/>
</dbReference>
<dbReference type="InterPro" id="IPR000847">
    <property type="entry name" value="Tscrpt_reg_HTH_LysR"/>
</dbReference>
<dbReference type="InterPro" id="IPR036388">
    <property type="entry name" value="WH-like_DNA-bd_sf"/>
</dbReference>
<dbReference type="InterPro" id="IPR036390">
    <property type="entry name" value="WH_DNA-bd_sf"/>
</dbReference>
<dbReference type="PANTHER" id="PTHR30537:SF70">
    <property type="entry name" value="HTH-TYPE TRANSCRIPTIONAL ACTIVATOR AMPR"/>
    <property type="match status" value="1"/>
</dbReference>
<dbReference type="PANTHER" id="PTHR30537">
    <property type="entry name" value="HTH-TYPE TRANSCRIPTIONAL REGULATOR"/>
    <property type="match status" value="1"/>
</dbReference>
<dbReference type="Pfam" id="PF00126">
    <property type="entry name" value="HTH_1"/>
    <property type="match status" value="1"/>
</dbReference>
<dbReference type="Pfam" id="PF03466">
    <property type="entry name" value="LysR_substrate"/>
    <property type="match status" value="1"/>
</dbReference>
<dbReference type="PRINTS" id="PR00039">
    <property type="entry name" value="HTHLYSR"/>
</dbReference>
<dbReference type="SUPFAM" id="SSF53850">
    <property type="entry name" value="Periplasmic binding protein-like II"/>
    <property type="match status" value="1"/>
</dbReference>
<dbReference type="SUPFAM" id="SSF46785">
    <property type="entry name" value="Winged helix' DNA-binding domain"/>
    <property type="match status" value="1"/>
</dbReference>
<dbReference type="PROSITE" id="PS50931">
    <property type="entry name" value="HTH_LYSR"/>
    <property type="match status" value="1"/>
</dbReference>
<proteinExistence type="inferred from homology"/>
<accession>P14145</accession>